<reference key="1">
    <citation type="journal article" date="1993" name="Mol. Biol. Evol.">
        <title>Molecular phylogenetics of Stenodermatini bat genera: congruence of data from nuclear and mitochondrial DNA.</title>
        <authorList>
            <person name="den Bussche R.A."/>
            <person name="Baker R.J."/>
            <person name="Wichman H.A."/>
            <person name="Hamilton M.J."/>
        </authorList>
    </citation>
    <scope>NUCLEOTIDE SEQUENCE [GENOMIC DNA]</scope>
    <source>
        <strain>Isolate TK 17627</strain>
        <tissue>Muscle</tissue>
    </source>
</reference>
<reference key="2">
    <citation type="journal article" date="1994" name="J. Mammal.">
        <title>Systematic relationships within Chiroderma (Chiroptera: Phyllostomidae) based on cytochrome b sequence variation.</title>
        <authorList>
            <person name="Baker R.J."/>
            <person name="Taddei V.A."/>
            <person name="Hudgeons J.L."/>
            <person name="den Bussche R.A."/>
        </authorList>
    </citation>
    <scope>NUCLEOTIDE SEQUENCE [GENOMIC DNA] OF 1-29</scope>
    <source>
        <strain>Isolate TK 17627</strain>
        <tissue>Liver</tissue>
    </source>
</reference>
<protein>
    <recommendedName>
        <fullName>Cytochrome b</fullName>
    </recommendedName>
    <alternativeName>
        <fullName>Complex III subunit 3</fullName>
    </alternativeName>
    <alternativeName>
        <fullName>Complex III subunit III</fullName>
    </alternativeName>
    <alternativeName>
        <fullName>Cytochrome b-c1 complex subunit 3</fullName>
    </alternativeName>
    <alternativeName>
        <fullName>Ubiquinol-cytochrome-c reductase complex cytochrome b subunit</fullName>
    </alternativeName>
</protein>
<feature type="chain" id="PRO_0000061412" description="Cytochrome b">
    <location>
        <begin position="1"/>
        <end position="134" status="greater than"/>
    </location>
</feature>
<feature type="transmembrane region" description="Helical" evidence="2">
    <location>
        <begin position="33"/>
        <end position="53"/>
    </location>
</feature>
<feature type="transmembrane region" description="Helical" evidence="2">
    <location>
        <begin position="77"/>
        <end position="98"/>
    </location>
</feature>
<feature type="transmembrane region" description="Helical" evidence="2">
    <location>
        <begin position="113"/>
        <end position="133"/>
    </location>
</feature>
<feature type="binding site" description="axial binding residue" evidence="2">
    <location>
        <position position="83"/>
    </location>
    <ligand>
        <name>heme b</name>
        <dbReference type="ChEBI" id="CHEBI:60344"/>
        <label>b562</label>
    </ligand>
    <ligandPart>
        <name>Fe</name>
        <dbReference type="ChEBI" id="CHEBI:18248"/>
    </ligandPart>
</feature>
<feature type="binding site" description="axial binding residue" evidence="2">
    <location>
        <position position="97"/>
    </location>
    <ligand>
        <name>heme b</name>
        <dbReference type="ChEBI" id="CHEBI:60344"/>
        <label>b566</label>
    </ligand>
    <ligandPart>
        <name>Fe</name>
        <dbReference type="ChEBI" id="CHEBI:18248"/>
    </ligandPart>
</feature>
<feature type="non-terminal residue">
    <location>
        <position position="134"/>
    </location>
</feature>
<organism>
    <name type="scientific">Platyrrhinus helleri</name>
    <name type="common">Heller's broad-nosed bat</name>
    <name type="synonym">Vampyrops helleri</name>
    <dbReference type="NCBI Taxonomy" id="27658"/>
    <lineage>
        <taxon>Eukaryota</taxon>
        <taxon>Metazoa</taxon>
        <taxon>Chordata</taxon>
        <taxon>Craniata</taxon>
        <taxon>Vertebrata</taxon>
        <taxon>Euteleostomi</taxon>
        <taxon>Mammalia</taxon>
        <taxon>Eutheria</taxon>
        <taxon>Laurasiatheria</taxon>
        <taxon>Chiroptera</taxon>
        <taxon>Yangochiroptera</taxon>
        <taxon>Phyllostomidae</taxon>
        <taxon>Stenodermatinae</taxon>
        <taxon>Platyrrhinus</taxon>
    </lineage>
</organism>
<proteinExistence type="inferred from homology"/>
<name>CYB_PLAHE</name>
<dbReference type="EMBL" id="L19517">
    <property type="protein sequence ID" value="AAA32043.1"/>
    <property type="molecule type" value="Genomic_DNA"/>
</dbReference>
<dbReference type="EMBL" id="L28940">
    <property type="protein sequence ID" value="AAA31146.1"/>
    <property type="molecule type" value="Genomic_DNA"/>
</dbReference>
<dbReference type="SMR" id="Q35467"/>
<dbReference type="GO" id="GO:0005743">
    <property type="term" value="C:mitochondrial inner membrane"/>
    <property type="evidence" value="ECO:0007669"/>
    <property type="project" value="UniProtKB-SubCell"/>
</dbReference>
<dbReference type="GO" id="GO:0046872">
    <property type="term" value="F:metal ion binding"/>
    <property type="evidence" value="ECO:0007669"/>
    <property type="project" value="UniProtKB-KW"/>
</dbReference>
<dbReference type="GO" id="GO:0008121">
    <property type="term" value="F:ubiquinol-cytochrome-c reductase activity"/>
    <property type="evidence" value="ECO:0007669"/>
    <property type="project" value="TreeGrafter"/>
</dbReference>
<dbReference type="GO" id="GO:0006122">
    <property type="term" value="P:mitochondrial electron transport, ubiquinol to cytochrome c"/>
    <property type="evidence" value="ECO:0007669"/>
    <property type="project" value="TreeGrafter"/>
</dbReference>
<dbReference type="CDD" id="cd00284">
    <property type="entry name" value="Cytochrome_b_N"/>
    <property type="match status" value="1"/>
</dbReference>
<dbReference type="Gene3D" id="1.20.810.10">
    <property type="entry name" value="Cytochrome Bc1 Complex, Chain C"/>
    <property type="match status" value="1"/>
</dbReference>
<dbReference type="InterPro" id="IPR005797">
    <property type="entry name" value="Cyt_b/b6_N"/>
</dbReference>
<dbReference type="InterPro" id="IPR027387">
    <property type="entry name" value="Cytb/b6-like_sf"/>
</dbReference>
<dbReference type="InterPro" id="IPR048259">
    <property type="entry name" value="Cytochrome_b_N_euk/bac"/>
</dbReference>
<dbReference type="InterPro" id="IPR016174">
    <property type="entry name" value="Di-haem_cyt_TM"/>
</dbReference>
<dbReference type="PANTHER" id="PTHR19271">
    <property type="entry name" value="CYTOCHROME B"/>
    <property type="match status" value="1"/>
</dbReference>
<dbReference type="PANTHER" id="PTHR19271:SF16">
    <property type="entry name" value="CYTOCHROME B"/>
    <property type="match status" value="1"/>
</dbReference>
<dbReference type="Pfam" id="PF00033">
    <property type="entry name" value="Cytochrome_B"/>
    <property type="match status" value="1"/>
</dbReference>
<dbReference type="SUPFAM" id="SSF81342">
    <property type="entry name" value="Transmembrane di-heme cytochromes"/>
    <property type="match status" value="1"/>
</dbReference>
<dbReference type="PROSITE" id="PS51002">
    <property type="entry name" value="CYTB_NTER"/>
    <property type="match status" value="1"/>
</dbReference>
<sequence length="134" mass="14974">MTNIRKTNPLLKIINSSFVDLPAPSSLSSWWNFGSLLGVCLGVQILTGLFLAIHYTSDTATAFNSVTHICRDVNYGWLLRYLHANGASMFFICLYLHVGRGLYYGSYTYSETWNIGILLLFAVMATAFMGYVLP</sequence>
<geneLocation type="mitochondrion"/>
<keyword id="KW-0249">Electron transport</keyword>
<keyword id="KW-0349">Heme</keyword>
<keyword id="KW-0408">Iron</keyword>
<keyword id="KW-0472">Membrane</keyword>
<keyword id="KW-0479">Metal-binding</keyword>
<keyword id="KW-0496">Mitochondrion</keyword>
<keyword id="KW-0999">Mitochondrion inner membrane</keyword>
<keyword id="KW-0679">Respiratory chain</keyword>
<keyword id="KW-0812">Transmembrane</keyword>
<keyword id="KW-1133">Transmembrane helix</keyword>
<keyword id="KW-0813">Transport</keyword>
<keyword id="KW-0830">Ubiquinone</keyword>
<gene>
    <name type="primary">MT-CYB</name>
    <name type="synonym">COB</name>
    <name type="synonym">CYTB</name>
    <name type="synonym">MTCYB</name>
</gene>
<evidence type="ECO:0000250" key="1"/>
<evidence type="ECO:0000250" key="2">
    <source>
        <dbReference type="UniProtKB" id="P00157"/>
    </source>
</evidence>
<evidence type="ECO:0000255" key="3">
    <source>
        <dbReference type="PROSITE-ProRule" id="PRU00968"/>
    </source>
</evidence>
<accession>Q35467</accession>
<accession>Q28771</accession>
<comment type="function">
    <text evidence="2">Component of the ubiquinol-cytochrome c reductase complex (complex III or cytochrome b-c1 complex) that is part of the mitochondrial respiratory chain. The b-c1 complex mediates electron transfer from ubiquinol to cytochrome c. Contributes to the generation of a proton gradient across the mitochondrial membrane that is then used for ATP synthesis.</text>
</comment>
<comment type="cofactor">
    <cofactor evidence="2">
        <name>heme b</name>
        <dbReference type="ChEBI" id="CHEBI:60344"/>
    </cofactor>
    <text evidence="2">Binds 2 heme b groups non-covalently.</text>
</comment>
<comment type="subunit">
    <text evidence="2">The cytochrome bc1 complex contains 11 subunits: 3 respiratory subunits (MT-CYB, CYC1 and UQCRFS1), 2 core proteins (UQCRC1 and UQCRC2) and 6 low-molecular weight proteins (UQCRH/QCR6, UQCRB/QCR7, UQCRQ/QCR8, UQCR10/QCR9, UQCR11/QCR10 and a cleavage product of UQCRFS1). This cytochrome bc1 complex then forms a dimer.</text>
</comment>
<comment type="subcellular location">
    <subcellularLocation>
        <location evidence="2">Mitochondrion inner membrane</location>
        <topology evidence="2">Multi-pass membrane protein</topology>
    </subcellularLocation>
</comment>
<comment type="miscellaneous">
    <text evidence="1">Heme 1 (or BL or b562) is low-potential and absorbs at about 562 nm, and heme 2 (or BH or b566) is high-potential and absorbs at about 566 nm.</text>
</comment>
<comment type="similarity">
    <text evidence="3">Belongs to the cytochrome b family.</text>
</comment>
<comment type="caution">
    <text evidence="2">The full-length protein contains only eight transmembrane helices, not nine as predicted by bioinformatics tools.</text>
</comment>